<accession>A1TAK2</accession>
<sequence>MVVKSALLFVLAAILEIGGAWLVWQGVREHRGLTWVGAGVIALGAYGFVAAFQPDAHFGRVLAAYGGVFVAGSLLWGVVADGFRPDRWDITGAAVCLAGVGLIMYAPR</sequence>
<protein>
    <recommendedName>
        <fullName evidence="1">UPF0060 membrane protein Mvan_3406</fullName>
    </recommendedName>
</protein>
<keyword id="KW-1003">Cell membrane</keyword>
<keyword id="KW-0472">Membrane</keyword>
<keyword id="KW-0812">Transmembrane</keyword>
<keyword id="KW-1133">Transmembrane helix</keyword>
<feature type="chain" id="PRO_0000282237" description="UPF0060 membrane protein Mvan_3406">
    <location>
        <begin position="1"/>
        <end position="108"/>
    </location>
</feature>
<feature type="transmembrane region" description="Helical" evidence="1">
    <location>
        <begin position="7"/>
        <end position="27"/>
    </location>
</feature>
<feature type="transmembrane region" description="Helical" evidence="1">
    <location>
        <begin position="32"/>
        <end position="52"/>
    </location>
</feature>
<feature type="transmembrane region" description="Helical" evidence="1">
    <location>
        <begin position="61"/>
        <end position="81"/>
    </location>
</feature>
<feature type="transmembrane region" description="Helical" evidence="1">
    <location>
        <begin position="87"/>
        <end position="107"/>
    </location>
</feature>
<proteinExistence type="inferred from homology"/>
<evidence type="ECO:0000255" key="1">
    <source>
        <dbReference type="HAMAP-Rule" id="MF_00010"/>
    </source>
</evidence>
<dbReference type="EMBL" id="CP000511">
    <property type="protein sequence ID" value="ABM14202.1"/>
    <property type="molecule type" value="Genomic_DNA"/>
</dbReference>
<dbReference type="RefSeq" id="WP_011780607.1">
    <property type="nucleotide sequence ID" value="NZ_JACKSD010000103.1"/>
</dbReference>
<dbReference type="SMR" id="A1TAK2"/>
<dbReference type="STRING" id="350058.Mvan_3406"/>
<dbReference type="KEGG" id="mva:Mvan_3406"/>
<dbReference type="eggNOG" id="COG1742">
    <property type="taxonomic scope" value="Bacteria"/>
</dbReference>
<dbReference type="HOGENOM" id="CLU_117653_0_1_11"/>
<dbReference type="Proteomes" id="UP000009159">
    <property type="component" value="Chromosome"/>
</dbReference>
<dbReference type="GO" id="GO:0005886">
    <property type="term" value="C:plasma membrane"/>
    <property type="evidence" value="ECO:0007669"/>
    <property type="project" value="UniProtKB-SubCell"/>
</dbReference>
<dbReference type="HAMAP" id="MF_00010">
    <property type="entry name" value="UPF0060"/>
    <property type="match status" value="1"/>
</dbReference>
<dbReference type="InterPro" id="IPR003844">
    <property type="entry name" value="UPF0060"/>
</dbReference>
<dbReference type="NCBIfam" id="NF002586">
    <property type="entry name" value="PRK02237.1"/>
    <property type="match status" value="1"/>
</dbReference>
<dbReference type="PANTHER" id="PTHR36116">
    <property type="entry name" value="UPF0060 MEMBRANE PROTEIN YNFA"/>
    <property type="match status" value="1"/>
</dbReference>
<dbReference type="PANTHER" id="PTHR36116:SF1">
    <property type="entry name" value="UPF0060 MEMBRANE PROTEIN YNFA"/>
    <property type="match status" value="1"/>
</dbReference>
<dbReference type="Pfam" id="PF02694">
    <property type="entry name" value="UPF0060"/>
    <property type="match status" value="1"/>
</dbReference>
<dbReference type="SUPFAM" id="SSF103481">
    <property type="entry name" value="Multidrug resistance efflux transporter EmrE"/>
    <property type="match status" value="1"/>
</dbReference>
<organism>
    <name type="scientific">Mycolicibacterium vanbaalenii (strain DSM 7251 / JCM 13017 / BCRC 16820 / KCTC 9966 / NRRL B-24157 / PYR-1)</name>
    <name type="common">Mycobacterium vanbaalenii</name>
    <dbReference type="NCBI Taxonomy" id="350058"/>
    <lineage>
        <taxon>Bacteria</taxon>
        <taxon>Bacillati</taxon>
        <taxon>Actinomycetota</taxon>
        <taxon>Actinomycetes</taxon>
        <taxon>Mycobacteriales</taxon>
        <taxon>Mycobacteriaceae</taxon>
        <taxon>Mycolicibacterium</taxon>
    </lineage>
</organism>
<comment type="subcellular location">
    <subcellularLocation>
        <location evidence="1">Cell membrane</location>
        <topology evidence="1">Multi-pass membrane protein</topology>
    </subcellularLocation>
</comment>
<comment type="similarity">
    <text evidence="1">Belongs to the UPF0060 family.</text>
</comment>
<name>Y3406_MYCVP</name>
<reference key="1">
    <citation type="submission" date="2006-12" db="EMBL/GenBank/DDBJ databases">
        <title>Complete sequence of Mycobacterium vanbaalenii PYR-1.</title>
        <authorList>
            <consortium name="US DOE Joint Genome Institute"/>
            <person name="Copeland A."/>
            <person name="Lucas S."/>
            <person name="Lapidus A."/>
            <person name="Barry K."/>
            <person name="Detter J.C."/>
            <person name="Glavina del Rio T."/>
            <person name="Hammon N."/>
            <person name="Israni S."/>
            <person name="Dalin E."/>
            <person name="Tice H."/>
            <person name="Pitluck S."/>
            <person name="Singan V."/>
            <person name="Schmutz J."/>
            <person name="Larimer F."/>
            <person name="Land M."/>
            <person name="Hauser L."/>
            <person name="Kyrpides N."/>
            <person name="Anderson I.J."/>
            <person name="Miller C."/>
            <person name="Richardson P."/>
        </authorList>
    </citation>
    <scope>NUCLEOTIDE SEQUENCE [LARGE SCALE GENOMIC DNA]</scope>
    <source>
        <strain>DSM 7251 / JCM 13017 / BCRC 16820 / KCTC 9966 / NRRL B-24157 / PYR-1</strain>
    </source>
</reference>
<gene>
    <name type="ordered locus">Mvan_3406</name>
</gene>